<reference key="1">
    <citation type="submission" date="2003-03" db="EMBL/GenBank/DDBJ databases">
        <title>African swine fever virus genomes.</title>
        <authorList>
            <person name="Kutish G.F."/>
            <person name="Rock D.L."/>
        </authorList>
    </citation>
    <scope>NUCLEOTIDE SEQUENCE [LARGE SCALE GENOMIC DNA]</scope>
</reference>
<protein>
    <recommendedName>
        <fullName>Uncharacterized membrane protein X69R</fullName>
    </recommendedName>
</protein>
<dbReference type="EMBL" id="AY261360">
    <property type="status" value="NOT_ANNOTATED_CDS"/>
    <property type="molecule type" value="Genomic_DNA"/>
</dbReference>
<dbReference type="SMR" id="P0CAJ1"/>
<dbReference type="Proteomes" id="UP000000861">
    <property type="component" value="Segment"/>
</dbReference>
<dbReference type="GO" id="GO:0033644">
    <property type="term" value="C:host cell membrane"/>
    <property type="evidence" value="ECO:0007669"/>
    <property type="project" value="UniProtKB-SubCell"/>
</dbReference>
<dbReference type="GO" id="GO:0016020">
    <property type="term" value="C:membrane"/>
    <property type="evidence" value="ECO:0007669"/>
    <property type="project" value="UniProtKB-KW"/>
</dbReference>
<name>VF69R_ASFK5</name>
<organism>
    <name type="scientific">African swine fever virus (isolate Pig/Kenya/KEN-50/1950)</name>
    <name type="common">ASFV</name>
    <dbReference type="NCBI Taxonomy" id="561445"/>
    <lineage>
        <taxon>Viruses</taxon>
        <taxon>Varidnaviria</taxon>
        <taxon>Bamfordvirae</taxon>
        <taxon>Nucleocytoviricota</taxon>
        <taxon>Pokkesviricetes</taxon>
        <taxon>Asfuvirales</taxon>
        <taxon>Asfarviridae</taxon>
        <taxon>Asfivirus</taxon>
        <taxon>African swine fever virus</taxon>
    </lineage>
</organism>
<sequence length="71" mass="8673">MLLLYTVMILTCIIYKLVPDNKYWPIHMFFFIMIYIVYMYEKLDIHEKSQFWNYTMARLSGHPVPTIICNC</sequence>
<keyword id="KW-0325">Glycoprotein</keyword>
<keyword id="KW-1043">Host membrane</keyword>
<keyword id="KW-0472">Membrane</keyword>
<keyword id="KW-0812">Transmembrane</keyword>
<keyword id="KW-1133">Transmembrane helix</keyword>
<gene>
    <name type="ordered locus">Ken-026</name>
</gene>
<comment type="subcellular location">
    <subcellularLocation>
        <location evidence="2">Host membrane</location>
        <topology evidence="2">Single-pass membrane protein</topology>
    </subcellularLocation>
</comment>
<comment type="similarity">
    <text evidence="2">Belongs to the asfivirus X69R family.</text>
</comment>
<proteinExistence type="inferred from homology"/>
<accession>P0CAJ1</accession>
<evidence type="ECO:0000255" key="1"/>
<evidence type="ECO:0000305" key="2"/>
<organismHost>
    <name type="scientific">Ornithodoros</name>
    <name type="common">relapsing fever ticks</name>
    <dbReference type="NCBI Taxonomy" id="6937"/>
</organismHost>
<organismHost>
    <name type="scientific">Phacochoerus aethiopicus</name>
    <name type="common">Warthog</name>
    <dbReference type="NCBI Taxonomy" id="85517"/>
</organismHost>
<organismHost>
    <name type="scientific">Phacochoerus africanus</name>
    <name type="common">Warthog</name>
    <dbReference type="NCBI Taxonomy" id="41426"/>
</organismHost>
<organismHost>
    <name type="scientific">Potamochoerus larvatus</name>
    <name type="common">Bushpig</name>
    <dbReference type="NCBI Taxonomy" id="273792"/>
</organismHost>
<organismHost>
    <name type="scientific">Sus scrofa</name>
    <name type="common">Pig</name>
    <dbReference type="NCBI Taxonomy" id="9823"/>
</organismHost>
<feature type="chain" id="PRO_0000373716" description="Uncharacterized membrane protein X69R">
    <location>
        <begin position="1"/>
        <end position="71"/>
    </location>
</feature>
<feature type="topological domain" description="Cytoplasmic" evidence="1">
    <location>
        <begin position="1"/>
        <end position="16"/>
    </location>
</feature>
<feature type="transmembrane region" description="Helical" evidence="1">
    <location>
        <begin position="17"/>
        <end position="38"/>
    </location>
</feature>
<feature type="topological domain" description="Extracellular" evidence="1">
    <location>
        <begin position="39"/>
        <end position="69"/>
    </location>
</feature>
<feature type="glycosylation site" description="N-linked (GlcNAc...) asparagine; by host" evidence="1">
    <location>
        <position position="53"/>
    </location>
</feature>